<proteinExistence type="inferred from homology"/>
<reference key="1">
    <citation type="journal article" date="2007" name="PLoS ONE">
        <title>Molecular correlates of host specialization in Staphylococcus aureus.</title>
        <authorList>
            <person name="Herron-Olson L."/>
            <person name="Fitzgerald J.R."/>
            <person name="Musser J.M."/>
            <person name="Kapur V."/>
        </authorList>
    </citation>
    <scope>NUCLEOTIDE SEQUENCE [LARGE SCALE GENOMIC DNA]</scope>
    <source>
        <strain>bovine RF122 / ET3-1</strain>
    </source>
</reference>
<comment type="function">
    <text evidence="1">Catalyzes the oxidation of 5,10-methylenetetrahydrofolate to 5,10-methenyltetrahydrofolate and then the hydrolysis of 5,10-methenyltetrahydrofolate to 10-formyltetrahydrofolate.</text>
</comment>
<comment type="catalytic activity">
    <reaction evidence="1">
        <text>(6R)-5,10-methylene-5,6,7,8-tetrahydrofolate + NADP(+) = (6R)-5,10-methenyltetrahydrofolate + NADPH</text>
        <dbReference type="Rhea" id="RHEA:22812"/>
        <dbReference type="ChEBI" id="CHEBI:15636"/>
        <dbReference type="ChEBI" id="CHEBI:57455"/>
        <dbReference type="ChEBI" id="CHEBI:57783"/>
        <dbReference type="ChEBI" id="CHEBI:58349"/>
        <dbReference type="EC" id="1.5.1.5"/>
    </reaction>
</comment>
<comment type="catalytic activity">
    <reaction evidence="1">
        <text>(6R)-5,10-methenyltetrahydrofolate + H2O = (6R)-10-formyltetrahydrofolate + H(+)</text>
        <dbReference type="Rhea" id="RHEA:23700"/>
        <dbReference type="ChEBI" id="CHEBI:15377"/>
        <dbReference type="ChEBI" id="CHEBI:15378"/>
        <dbReference type="ChEBI" id="CHEBI:57455"/>
        <dbReference type="ChEBI" id="CHEBI:195366"/>
        <dbReference type="EC" id="3.5.4.9"/>
    </reaction>
</comment>
<comment type="pathway">
    <text evidence="1">One-carbon metabolism; tetrahydrofolate interconversion.</text>
</comment>
<comment type="subunit">
    <text evidence="1">Homodimer.</text>
</comment>
<comment type="similarity">
    <text evidence="1">Belongs to the tetrahydrofolate dehydrogenase/cyclohydrolase family.</text>
</comment>
<dbReference type="EC" id="1.5.1.5" evidence="1"/>
<dbReference type="EC" id="3.5.4.9" evidence="1"/>
<dbReference type="EMBL" id="AJ938182">
    <property type="protein sequence ID" value="CAI80618.1"/>
    <property type="molecule type" value="Genomic_DNA"/>
</dbReference>
<dbReference type="RefSeq" id="WP_000225846.1">
    <property type="nucleotide sequence ID" value="NC_007622.1"/>
</dbReference>
<dbReference type="SMR" id="Q2YX11"/>
<dbReference type="KEGG" id="sab:SAB0930c"/>
<dbReference type="HOGENOM" id="CLU_034045_2_1_9"/>
<dbReference type="UniPathway" id="UPA00193"/>
<dbReference type="GO" id="GO:0005829">
    <property type="term" value="C:cytosol"/>
    <property type="evidence" value="ECO:0007669"/>
    <property type="project" value="TreeGrafter"/>
</dbReference>
<dbReference type="GO" id="GO:0004477">
    <property type="term" value="F:methenyltetrahydrofolate cyclohydrolase activity"/>
    <property type="evidence" value="ECO:0007669"/>
    <property type="project" value="UniProtKB-UniRule"/>
</dbReference>
<dbReference type="GO" id="GO:0004488">
    <property type="term" value="F:methylenetetrahydrofolate dehydrogenase (NADP+) activity"/>
    <property type="evidence" value="ECO:0007669"/>
    <property type="project" value="UniProtKB-UniRule"/>
</dbReference>
<dbReference type="GO" id="GO:0000105">
    <property type="term" value="P:L-histidine biosynthetic process"/>
    <property type="evidence" value="ECO:0007669"/>
    <property type="project" value="UniProtKB-KW"/>
</dbReference>
<dbReference type="GO" id="GO:0009086">
    <property type="term" value="P:methionine biosynthetic process"/>
    <property type="evidence" value="ECO:0007669"/>
    <property type="project" value="UniProtKB-KW"/>
</dbReference>
<dbReference type="GO" id="GO:0006164">
    <property type="term" value="P:purine nucleotide biosynthetic process"/>
    <property type="evidence" value="ECO:0007669"/>
    <property type="project" value="UniProtKB-KW"/>
</dbReference>
<dbReference type="GO" id="GO:0035999">
    <property type="term" value="P:tetrahydrofolate interconversion"/>
    <property type="evidence" value="ECO:0007669"/>
    <property type="project" value="UniProtKB-UniRule"/>
</dbReference>
<dbReference type="CDD" id="cd01080">
    <property type="entry name" value="NAD_bind_m-THF_DH_Cyclohyd"/>
    <property type="match status" value="1"/>
</dbReference>
<dbReference type="FunFam" id="3.40.50.10860:FF:000001">
    <property type="entry name" value="Bifunctional protein FolD"/>
    <property type="match status" value="1"/>
</dbReference>
<dbReference type="FunFam" id="3.40.50.720:FF:000094">
    <property type="entry name" value="Bifunctional protein FolD"/>
    <property type="match status" value="1"/>
</dbReference>
<dbReference type="Gene3D" id="3.40.50.10860">
    <property type="entry name" value="Leucine Dehydrogenase, chain A, domain 1"/>
    <property type="match status" value="1"/>
</dbReference>
<dbReference type="Gene3D" id="3.40.50.720">
    <property type="entry name" value="NAD(P)-binding Rossmann-like Domain"/>
    <property type="match status" value="1"/>
</dbReference>
<dbReference type="HAMAP" id="MF_01576">
    <property type="entry name" value="THF_DHG_CYH"/>
    <property type="match status" value="1"/>
</dbReference>
<dbReference type="InterPro" id="IPR046346">
    <property type="entry name" value="Aminoacid_DH-like_N_sf"/>
</dbReference>
<dbReference type="InterPro" id="IPR036291">
    <property type="entry name" value="NAD(P)-bd_dom_sf"/>
</dbReference>
<dbReference type="InterPro" id="IPR000672">
    <property type="entry name" value="THF_DH/CycHdrlase"/>
</dbReference>
<dbReference type="InterPro" id="IPR020630">
    <property type="entry name" value="THF_DH/CycHdrlase_cat_dom"/>
</dbReference>
<dbReference type="InterPro" id="IPR020631">
    <property type="entry name" value="THF_DH/CycHdrlase_NAD-bd_dom"/>
</dbReference>
<dbReference type="NCBIfam" id="NF010772">
    <property type="entry name" value="PRK14175.1"/>
    <property type="match status" value="1"/>
</dbReference>
<dbReference type="PANTHER" id="PTHR48099:SF5">
    <property type="entry name" value="C-1-TETRAHYDROFOLATE SYNTHASE, CYTOPLASMIC"/>
    <property type="match status" value="1"/>
</dbReference>
<dbReference type="PANTHER" id="PTHR48099">
    <property type="entry name" value="C-1-TETRAHYDROFOLATE SYNTHASE, CYTOPLASMIC-RELATED"/>
    <property type="match status" value="1"/>
</dbReference>
<dbReference type="Pfam" id="PF00763">
    <property type="entry name" value="THF_DHG_CYH"/>
    <property type="match status" value="1"/>
</dbReference>
<dbReference type="Pfam" id="PF02882">
    <property type="entry name" value="THF_DHG_CYH_C"/>
    <property type="match status" value="1"/>
</dbReference>
<dbReference type="PRINTS" id="PR00085">
    <property type="entry name" value="THFDHDRGNASE"/>
</dbReference>
<dbReference type="SUPFAM" id="SSF53223">
    <property type="entry name" value="Aminoacid dehydrogenase-like, N-terminal domain"/>
    <property type="match status" value="1"/>
</dbReference>
<dbReference type="SUPFAM" id="SSF51735">
    <property type="entry name" value="NAD(P)-binding Rossmann-fold domains"/>
    <property type="match status" value="1"/>
</dbReference>
<accession>Q2YX11</accession>
<evidence type="ECO:0000255" key="1">
    <source>
        <dbReference type="HAMAP-Rule" id="MF_01576"/>
    </source>
</evidence>
<feature type="chain" id="PRO_0000265944" description="Bifunctional protein FolD">
    <location>
        <begin position="1"/>
        <end position="286"/>
    </location>
</feature>
<feature type="binding site" evidence="1">
    <location>
        <begin position="165"/>
        <end position="167"/>
    </location>
    <ligand>
        <name>NADP(+)</name>
        <dbReference type="ChEBI" id="CHEBI:58349"/>
    </ligand>
</feature>
<feature type="binding site" evidence="1">
    <location>
        <position position="190"/>
    </location>
    <ligand>
        <name>NADP(+)</name>
        <dbReference type="ChEBI" id="CHEBI:58349"/>
    </ligand>
</feature>
<sequence length="286" mass="30815">MVAKILDGKQIAKDYRQGLQNQVEALKEKGFTPKLSVILVGNDGASQSYVRSKKKAAEKIGMISEIVHLEETATEEEVLNELNRLNNDDSVSGILVQVPLPKQVSEQKILEAINPDKDVDGFHPINIGKLYIDEQTFVPCTPLGIMEILKHADIDLEGKNAVVIGRSHIVGQPVSKLLLQKNASVTILHSRSKDMASYLKDADVIVSAVGKPGLVTKDVVKEGAVIIDVGNTPDENGKLKGDVDYDAVKEIAGAITPVPGGVGPLTITMVLNNTLLAEKMRRGVDS</sequence>
<keyword id="KW-0028">Amino-acid biosynthesis</keyword>
<keyword id="KW-0368">Histidine biosynthesis</keyword>
<keyword id="KW-0378">Hydrolase</keyword>
<keyword id="KW-0486">Methionine biosynthesis</keyword>
<keyword id="KW-0511">Multifunctional enzyme</keyword>
<keyword id="KW-0521">NADP</keyword>
<keyword id="KW-0554">One-carbon metabolism</keyword>
<keyword id="KW-0560">Oxidoreductase</keyword>
<keyword id="KW-0658">Purine biosynthesis</keyword>
<organism>
    <name type="scientific">Staphylococcus aureus (strain bovine RF122 / ET3-1)</name>
    <dbReference type="NCBI Taxonomy" id="273036"/>
    <lineage>
        <taxon>Bacteria</taxon>
        <taxon>Bacillati</taxon>
        <taxon>Bacillota</taxon>
        <taxon>Bacilli</taxon>
        <taxon>Bacillales</taxon>
        <taxon>Staphylococcaceae</taxon>
        <taxon>Staphylococcus</taxon>
    </lineage>
</organism>
<gene>
    <name evidence="1" type="primary">folD</name>
    <name type="ordered locus">SAB0930c</name>
</gene>
<name>FOLD_STAAB</name>
<protein>
    <recommendedName>
        <fullName evidence="1">Bifunctional protein FolD</fullName>
    </recommendedName>
    <domain>
        <recommendedName>
            <fullName evidence="1">Methylenetetrahydrofolate dehydrogenase</fullName>
            <ecNumber evidence="1">1.5.1.5</ecNumber>
        </recommendedName>
    </domain>
    <domain>
        <recommendedName>
            <fullName evidence="1">Methenyltetrahydrofolate cyclohydrolase</fullName>
            <ecNumber evidence="1">3.5.4.9</ecNumber>
        </recommendedName>
    </domain>
</protein>